<organism>
    <name type="scientific">Rattus norvegicus</name>
    <name type="common">Rat</name>
    <dbReference type="NCBI Taxonomy" id="10116"/>
    <lineage>
        <taxon>Eukaryota</taxon>
        <taxon>Metazoa</taxon>
        <taxon>Chordata</taxon>
        <taxon>Craniata</taxon>
        <taxon>Vertebrata</taxon>
        <taxon>Euteleostomi</taxon>
        <taxon>Mammalia</taxon>
        <taxon>Eutheria</taxon>
        <taxon>Euarchontoglires</taxon>
        <taxon>Glires</taxon>
        <taxon>Rodentia</taxon>
        <taxon>Myomorpha</taxon>
        <taxon>Muroidea</taxon>
        <taxon>Muridae</taxon>
        <taxon>Murinae</taxon>
        <taxon>Rattus</taxon>
    </lineage>
</organism>
<proteinExistence type="evidence at protein level"/>
<keyword id="KW-0494">Milk protein</keyword>
<keyword id="KW-0597">Phosphoprotein</keyword>
<keyword id="KW-1185">Reference proteome</keyword>
<keyword id="KW-0677">Repeat</keyword>
<keyword id="KW-0964">Secreted</keyword>
<keyword id="KW-0732">Signal</keyword>
<sequence>MKLLILTCLVAAALALPRAHRRNAVSSQTQQENSSSEEQEIVKQPKYLSLNEEFVNNLNRQRELLTEQDNEIKITMDSSAEEQATASAQEDSSSSSSSSEESKDAIPSATEQKNIANKEILNRCTLEQLQRQIKYSQLLQQASLAQQASLAQQASLAQQALLAQQPSLAQQAALAQQASLAQQASLAQQASLAQKHHPRLSQVYYPNMEQPYRMNAYSQVQMRHPMSVVDQAQFSVQSFPQLSQYGAYPLWLYFPQDMQYLTPEAVLNTFKPIAPKDAENTNVW</sequence>
<dbReference type="EMBL" id="J00710">
    <property type="status" value="NOT_ANNOTATED_CDS"/>
    <property type="molecule type" value="mRNA"/>
</dbReference>
<dbReference type="EMBL" id="X03585">
    <property type="protein sequence ID" value="CAA27261.1"/>
    <property type="molecule type" value="Genomic_DNA"/>
</dbReference>
<dbReference type="EMBL" id="X03586">
    <property type="protein sequence ID" value="CAA27262.1"/>
    <property type="molecule type" value="Genomic_DNA"/>
</dbReference>
<dbReference type="EMBL" id="X03587">
    <property type="protein sequence ID" value="CAA27263.1"/>
    <property type="molecule type" value="Genomic_DNA"/>
</dbReference>
<dbReference type="EMBL" id="X03588">
    <property type="protein sequence ID" value="CAA27264.1"/>
    <property type="molecule type" value="Genomic_DNA"/>
</dbReference>
<dbReference type="PIR" id="A03105">
    <property type="entry name" value="KART"/>
</dbReference>
<dbReference type="RefSeq" id="NP_620229.2">
    <property type="nucleotide sequence ID" value="NM_138874.2"/>
</dbReference>
<dbReference type="SMR" id="P02661"/>
<dbReference type="FunCoup" id="P02661">
    <property type="interactions" value="34"/>
</dbReference>
<dbReference type="STRING" id="10116.ENSRNOP00000072759"/>
<dbReference type="Allergome" id="2151">
    <property type="allergen name" value="Rat n 8"/>
</dbReference>
<dbReference type="iPTMnet" id="P02661"/>
<dbReference type="PhosphoSitePlus" id="P02661"/>
<dbReference type="PaxDb" id="10116-ENSRNOP00000056956"/>
<dbReference type="GeneID" id="24284"/>
<dbReference type="KEGG" id="rno:24284"/>
<dbReference type="UCSC" id="RGD:2430">
    <property type="organism name" value="rat"/>
</dbReference>
<dbReference type="AGR" id="RGD:2430"/>
<dbReference type="CTD" id="1446"/>
<dbReference type="RGD" id="2430">
    <property type="gene designation" value="Csn1s1"/>
</dbReference>
<dbReference type="eggNOG" id="ENOG502TEWT">
    <property type="taxonomic scope" value="Eukaryota"/>
</dbReference>
<dbReference type="InParanoid" id="P02661"/>
<dbReference type="OrthoDB" id="91403at9989"/>
<dbReference type="Reactome" id="R-RNO-5223345">
    <property type="pathway name" value="Miscellaneous transport and binding events"/>
</dbReference>
<dbReference type="PRO" id="PR:P02661"/>
<dbReference type="Proteomes" id="UP000002494">
    <property type="component" value="Unplaced"/>
</dbReference>
<dbReference type="GO" id="GO:0005576">
    <property type="term" value="C:extracellular region"/>
    <property type="evidence" value="ECO:0000266"/>
    <property type="project" value="RGD"/>
</dbReference>
<dbReference type="GO" id="GO:0005615">
    <property type="term" value="C:extracellular space"/>
    <property type="evidence" value="ECO:0000318"/>
    <property type="project" value="GO_Central"/>
</dbReference>
<dbReference type="GO" id="GO:1903496">
    <property type="term" value="P:response to 11-deoxycorticosterone"/>
    <property type="evidence" value="ECO:0000318"/>
    <property type="project" value="GO_Central"/>
</dbReference>
<dbReference type="GO" id="GO:1903494">
    <property type="term" value="P:response to dehydroepiandrosterone"/>
    <property type="evidence" value="ECO:0000318"/>
    <property type="project" value="GO_Central"/>
</dbReference>
<dbReference type="GO" id="GO:0032355">
    <property type="term" value="P:response to estradiol"/>
    <property type="evidence" value="ECO:0000318"/>
    <property type="project" value="GO_Central"/>
</dbReference>
<dbReference type="GO" id="GO:0032570">
    <property type="term" value="P:response to progesterone"/>
    <property type="evidence" value="ECO:0000318"/>
    <property type="project" value="GO_Central"/>
</dbReference>
<dbReference type="InterPro" id="IPR026999">
    <property type="entry name" value="Alpha-s1_casein"/>
</dbReference>
<dbReference type="InterPro" id="IPR001588">
    <property type="entry name" value="Casein"/>
</dbReference>
<dbReference type="InterPro" id="IPR031305">
    <property type="entry name" value="Casein_CS"/>
</dbReference>
<dbReference type="PANTHER" id="PTHR10240">
    <property type="entry name" value="ALPHA-S1-CASEIN"/>
    <property type="match status" value="1"/>
</dbReference>
<dbReference type="PANTHER" id="PTHR10240:SF0">
    <property type="entry name" value="ALPHA-S1-CASEIN"/>
    <property type="match status" value="1"/>
</dbReference>
<dbReference type="Pfam" id="PF00363">
    <property type="entry name" value="Casein"/>
    <property type="match status" value="1"/>
</dbReference>
<dbReference type="PROSITE" id="PS00306">
    <property type="entry name" value="CASEIN_ALPHA_BETA"/>
    <property type="match status" value="1"/>
</dbReference>
<feature type="signal peptide" evidence="1">
    <location>
        <begin position="1"/>
        <end position="15"/>
    </location>
</feature>
<feature type="chain" id="PRO_0000004458" description="Alpha-S1-casein">
    <location>
        <begin position="16"/>
        <end position="284"/>
    </location>
</feature>
<feature type="repeat" description="1">
    <location>
        <begin position="138"/>
        <end position="143"/>
    </location>
</feature>
<feature type="repeat" description="2">
    <location>
        <begin position="144"/>
        <end position="149"/>
    </location>
</feature>
<feature type="repeat" description="3">
    <location>
        <begin position="150"/>
        <end position="155"/>
    </location>
</feature>
<feature type="repeat" description="4">
    <location>
        <begin position="156"/>
        <end position="161"/>
    </location>
</feature>
<feature type="repeat" description="5">
    <location>
        <begin position="162"/>
        <end position="167"/>
    </location>
</feature>
<feature type="repeat" description="6">
    <location>
        <begin position="168"/>
        <end position="173"/>
    </location>
</feature>
<feature type="repeat" description="7">
    <location>
        <begin position="174"/>
        <end position="179"/>
    </location>
</feature>
<feature type="repeat" description="8">
    <location>
        <begin position="180"/>
        <end position="185"/>
    </location>
</feature>
<feature type="repeat" description="9">
    <location>
        <begin position="186"/>
        <end position="191"/>
    </location>
</feature>
<feature type="repeat" description="10">
    <location>
        <begin position="192"/>
        <end position="197"/>
    </location>
</feature>
<feature type="region of interest" description="Disordered" evidence="7">
    <location>
        <begin position="21"/>
        <end position="44"/>
    </location>
</feature>
<feature type="region of interest" description="Disordered" evidence="7">
    <location>
        <begin position="78"/>
        <end position="111"/>
    </location>
</feature>
<feature type="region of interest" description="10 X 6 AA tandem repeats">
    <location>
        <begin position="138"/>
        <end position="197"/>
    </location>
</feature>
<feature type="compositionally biased region" description="Low complexity" evidence="7">
    <location>
        <begin position="24"/>
        <end position="36"/>
    </location>
</feature>
<feature type="compositionally biased region" description="Low complexity" evidence="7">
    <location>
        <begin position="78"/>
        <end position="99"/>
    </location>
</feature>
<feature type="modified residue" description="Phosphoserine" evidence="3">
    <location>
        <position position="79"/>
    </location>
</feature>
<feature type="modified residue" description="Phosphoserine" evidence="2">
    <location>
        <position position="93"/>
    </location>
</feature>
<feature type="modified residue" description="Phosphoserine" evidence="6">
    <location>
        <position position="94"/>
    </location>
</feature>
<feature type="modified residue" description="Phosphoserine" evidence="4">
    <location>
        <position position="95"/>
    </location>
</feature>
<feature type="modified residue" description="Phosphoserine" evidence="5">
    <location>
        <position position="96"/>
    </location>
</feature>
<feature type="modified residue" description="Phosphoserine" evidence="4">
    <location>
        <position position="97"/>
    </location>
</feature>
<feature type="modified residue" description="Phosphoserine" evidence="3">
    <location>
        <position position="98"/>
    </location>
</feature>
<feature type="modified residue" description="Phosphoserine" evidence="4">
    <location>
        <position position="99"/>
    </location>
</feature>
<evidence type="ECO:0000250" key="1"/>
<evidence type="ECO:0000250" key="2">
    <source>
        <dbReference type="UniProtKB" id="O97943"/>
    </source>
</evidence>
<evidence type="ECO:0000250" key="3">
    <source>
        <dbReference type="UniProtKB" id="P02662"/>
    </source>
</evidence>
<evidence type="ECO:0000250" key="4">
    <source>
        <dbReference type="UniProtKB" id="P04653"/>
    </source>
</evidence>
<evidence type="ECO:0000250" key="5">
    <source>
        <dbReference type="UniProtKB" id="P18626"/>
    </source>
</evidence>
<evidence type="ECO:0000250" key="6">
    <source>
        <dbReference type="UniProtKB" id="P47710"/>
    </source>
</evidence>
<evidence type="ECO:0000256" key="7">
    <source>
        <dbReference type="SAM" id="MobiDB-lite"/>
    </source>
</evidence>
<evidence type="ECO:0000305" key="8"/>
<name>CASA1_RAT</name>
<gene>
    <name type="primary">Csn1s1</name>
    <name type="synonym">Csna</name>
</gene>
<comment type="function">
    <text>Important role in the capacity of milk to transport calcium phosphate.</text>
</comment>
<comment type="subcellular location">
    <subcellularLocation>
        <location>Secreted</location>
    </subcellularLocation>
</comment>
<comment type="tissue specificity">
    <text>Mammary gland specific. Secreted in milk.</text>
</comment>
<comment type="similarity">
    <text evidence="8">Belongs to the alpha-casein family.</text>
</comment>
<reference key="1">
    <citation type="journal article" date="1982" name="Nucleic Acids Res.">
        <title>Sequence of rat alpha- and gamma-casein mRNAs: evolutionary comparison of the calcium-dependent rat casein multigene family.</title>
        <authorList>
            <person name="Hobbs A.A."/>
            <person name="Rosen J.M."/>
        </authorList>
    </citation>
    <scope>NUCLEOTIDE SEQUENCE [MRNA]</scope>
</reference>
<reference key="2">
    <citation type="journal article" date="1986" name="Nucleic Acids Res.">
        <title>Evolution of the casein multigene family: conserved sequences in the 5' flanking and exon regions.</title>
        <authorList>
            <person name="Yu-Lee L.Y."/>
            <person name="Richter-Mann L."/>
            <person name="Couch C.H."/>
            <person name="Stewart A.F."/>
            <person name="Mackinlay A.G."/>
            <person name="Rosen J.M."/>
        </authorList>
    </citation>
    <scope>NUCLEOTIDE SEQUENCE [GENOMIC DNA] OF 1-52</scope>
</reference>
<reference key="3">
    <citation type="journal article" date="2012" name="Nat. Commun.">
        <title>Quantitative maps of protein phosphorylation sites across 14 different rat organs and tissues.</title>
        <authorList>
            <person name="Lundby A."/>
            <person name="Secher A."/>
            <person name="Lage K."/>
            <person name="Nordsborg N.B."/>
            <person name="Dmytriyev A."/>
            <person name="Lundby C."/>
            <person name="Olsen J.V."/>
        </authorList>
    </citation>
    <scope>IDENTIFICATION BY MASS SPECTROMETRY [LARGE SCALE ANALYSIS]</scope>
</reference>
<protein>
    <recommendedName>
        <fullName>Alpha-S1-casein</fullName>
        <shortName>Alpha-casein</shortName>
    </recommendedName>
</protein>
<accession>P02661</accession>